<proteinExistence type="evidence at protein level"/>
<organism>
    <name type="scientific">Thermus thermophilus (strain ATCC BAA-163 / DSM 7039 / HB27)</name>
    <dbReference type="NCBI Taxonomy" id="262724"/>
    <lineage>
        <taxon>Bacteria</taxon>
        <taxon>Thermotogati</taxon>
        <taxon>Deinococcota</taxon>
        <taxon>Deinococci</taxon>
        <taxon>Thermales</taxon>
        <taxon>Thermaceae</taxon>
        <taxon>Thermus</taxon>
    </lineage>
</organism>
<name>RS7_THET2</name>
<accession>P62667</accession>
<feature type="initiator methionine" description="Removed" evidence="1">
    <location>
        <position position="1"/>
    </location>
</feature>
<feature type="chain" id="PRO_0000124368" description="Small ribosomal subunit protein uS7">
    <location>
        <begin position="2"/>
        <end position="156"/>
    </location>
</feature>
<feature type="strand" evidence="4">
    <location>
        <begin position="16"/>
        <end position="18"/>
    </location>
</feature>
<feature type="helix" evidence="4">
    <location>
        <begin position="21"/>
        <end position="30"/>
    </location>
</feature>
<feature type="strand" evidence="5">
    <location>
        <begin position="32"/>
        <end position="34"/>
    </location>
</feature>
<feature type="helix" evidence="4">
    <location>
        <begin position="36"/>
        <end position="53"/>
    </location>
</feature>
<feature type="strand" evidence="3">
    <location>
        <begin position="54"/>
        <end position="56"/>
    </location>
</feature>
<feature type="helix" evidence="4">
    <location>
        <begin position="58"/>
        <end position="68"/>
    </location>
</feature>
<feature type="strand" evidence="4">
    <location>
        <begin position="72"/>
        <end position="80"/>
    </location>
</feature>
<feature type="strand" evidence="4">
    <location>
        <begin position="83"/>
        <end position="90"/>
    </location>
</feature>
<feature type="helix" evidence="4">
    <location>
        <begin position="93"/>
        <end position="110"/>
    </location>
</feature>
<feature type="helix" evidence="4">
    <location>
        <begin position="116"/>
        <end position="129"/>
    </location>
</feature>
<feature type="helix" evidence="4">
    <location>
        <begin position="133"/>
        <end position="147"/>
    </location>
</feature>
<feature type="helix" evidence="4">
    <location>
        <begin position="148"/>
        <end position="154"/>
    </location>
</feature>
<comment type="function">
    <text evidence="1">One of the primary rRNA binding proteins, it binds directly to 16S rRNA where it nucleates assembly of the head domain of the 30S subunit. Is located at the subunit interface close to the decoding center, probably blocks exit of the E-site tRNA (By similarity).</text>
</comment>
<comment type="subunit">
    <text evidence="1">Part of the 30S ribosomal subunit. Contacts proteins S9 and S11 (By similarity).</text>
</comment>
<comment type="similarity">
    <text evidence="2">Belongs to the universal ribosomal protein uS7 family.</text>
</comment>
<dbReference type="EMBL" id="AE017221">
    <property type="protein sequence ID" value="AAS81674.1"/>
    <property type="molecule type" value="Genomic_DNA"/>
</dbReference>
<dbReference type="RefSeq" id="WP_008633429.1">
    <property type="nucleotide sequence ID" value="NC_005835.1"/>
</dbReference>
<dbReference type="PDB" id="4KVB">
    <property type="method" value="X-ray"/>
    <property type="resolution" value="4.20 A"/>
    <property type="chains" value="G=1-156"/>
</dbReference>
<dbReference type="PDB" id="4V4I">
    <property type="method" value="X-ray"/>
    <property type="resolution" value="3.71 A"/>
    <property type="chains" value="h=1-156"/>
</dbReference>
<dbReference type="PDB" id="4V4J">
    <property type="method" value="X-ray"/>
    <property type="resolution" value="3.83 A"/>
    <property type="chains" value="h=1-156"/>
</dbReference>
<dbReference type="PDB" id="4V5L">
    <property type="method" value="X-ray"/>
    <property type="resolution" value="3.10 A"/>
    <property type="chains" value="AG=1-156"/>
</dbReference>
<dbReference type="PDB" id="4V63">
    <property type="method" value="X-ray"/>
    <property type="resolution" value="3.21 A"/>
    <property type="chains" value="AG/CG=1-156"/>
</dbReference>
<dbReference type="PDB" id="4V67">
    <property type="method" value="X-ray"/>
    <property type="resolution" value="3.00 A"/>
    <property type="chains" value="AG/CG=1-156"/>
</dbReference>
<dbReference type="PDB" id="4V7P">
    <property type="method" value="X-ray"/>
    <property type="resolution" value="3.62 A"/>
    <property type="chains" value="AG/DG=2-156"/>
</dbReference>
<dbReference type="PDB" id="4V83">
    <property type="method" value="X-ray"/>
    <property type="resolution" value="3.50 A"/>
    <property type="chains" value="AG/CG=2-156"/>
</dbReference>
<dbReference type="PDB" id="4V84">
    <property type="method" value="X-ray"/>
    <property type="resolution" value="3.40 A"/>
    <property type="chains" value="AG/CG=2-156"/>
</dbReference>
<dbReference type="PDB" id="4V9J">
    <property type="method" value="X-ray"/>
    <property type="resolution" value="3.86 A"/>
    <property type="chains" value="AG/CG=2-156"/>
</dbReference>
<dbReference type="PDB" id="4V9K">
    <property type="method" value="X-ray"/>
    <property type="resolution" value="3.50 A"/>
    <property type="chains" value="AG/CG=2-156"/>
</dbReference>
<dbReference type="PDB" id="4V9L">
    <property type="method" value="X-ray"/>
    <property type="resolution" value="3.50 A"/>
    <property type="chains" value="AG/CG=2-156"/>
</dbReference>
<dbReference type="PDB" id="4V9M">
    <property type="method" value="X-ray"/>
    <property type="resolution" value="4.00 A"/>
    <property type="chains" value="AG/CG=2-156"/>
</dbReference>
<dbReference type="PDB" id="4V9N">
    <property type="method" value="X-ray"/>
    <property type="resolution" value="3.40 A"/>
    <property type="chains" value="AG/CG=2-156"/>
</dbReference>
<dbReference type="PDB" id="4V9Q">
    <property type="method" value="X-ray"/>
    <property type="resolution" value="3.40 A"/>
    <property type="chains" value="BG/DG=2-156"/>
</dbReference>
<dbReference type="PDB" id="4W29">
    <property type="method" value="X-ray"/>
    <property type="resolution" value="3.80 A"/>
    <property type="chains" value="AG/CG=2-156"/>
</dbReference>
<dbReference type="PDB" id="4XEJ">
    <property type="method" value="X-ray"/>
    <property type="resolution" value="3.80 A"/>
    <property type="chains" value="AS07/BS07=2-156"/>
</dbReference>
<dbReference type="PDB" id="5J4D">
    <property type="method" value="X-ray"/>
    <property type="resolution" value="3.10 A"/>
    <property type="chains" value="PA/UC=1-156"/>
</dbReference>
<dbReference type="PDB" id="5V8I">
    <property type="method" value="X-ray"/>
    <property type="resolution" value="3.25 A"/>
    <property type="chains" value="1g/2g=1-156"/>
</dbReference>
<dbReference type="PDB" id="6B4V">
    <property type="method" value="X-ray"/>
    <property type="resolution" value="3.40 A"/>
    <property type="chains" value="PA/TC=1-156"/>
</dbReference>
<dbReference type="PDB" id="6BOH">
    <property type="method" value="X-ray"/>
    <property type="resolution" value="3.40 A"/>
    <property type="chains" value="QA/VC=1-156"/>
</dbReference>
<dbReference type="PDB" id="6BOK">
    <property type="method" value="X-ray"/>
    <property type="resolution" value="3.55 A"/>
    <property type="chains" value="OA/RC=1-156"/>
</dbReference>
<dbReference type="PDB" id="6N1D">
    <property type="method" value="X-ray"/>
    <property type="resolution" value="3.20 A"/>
    <property type="chains" value="AS07/BS07=2-156"/>
</dbReference>
<dbReference type="PDBsum" id="4KVB"/>
<dbReference type="PDBsum" id="4V4I"/>
<dbReference type="PDBsum" id="4V4J"/>
<dbReference type="PDBsum" id="4V5L"/>
<dbReference type="PDBsum" id="4V63"/>
<dbReference type="PDBsum" id="4V67"/>
<dbReference type="PDBsum" id="4V7P"/>
<dbReference type="PDBsum" id="4V83"/>
<dbReference type="PDBsum" id="4V84"/>
<dbReference type="PDBsum" id="4V9J"/>
<dbReference type="PDBsum" id="4V9K"/>
<dbReference type="PDBsum" id="4V9L"/>
<dbReference type="PDBsum" id="4V9M"/>
<dbReference type="PDBsum" id="4V9N"/>
<dbReference type="PDBsum" id="4V9Q"/>
<dbReference type="PDBsum" id="4W29"/>
<dbReference type="PDBsum" id="4XEJ"/>
<dbReference type="PDBsum" id="5J4D"/>
<dbReference type="PDBsum" id="5V8I"/>
<dbReference type="PDBsum" id="6B4V"/>
<dbReference type="PDBsum" id="6BOH"/>
<dbReference type="PDBsum" id="6BOK"/>
<dbReference type="PDBsum" id="6N1D"/>
<dbReference type="SMR" id="P62667"/>
<dbReference type="IntAct" id="P62667">
    <property type="interactions" value="4"/>
</dbReference>
<dbReference type="GeneID" id="3167931"/>
<dbReference type="KEGG" id="tth:TT_C1332"/>
<dbReference type="eggNOG" id="COG0049">
    <property type="taxonomic scope" value="Bacteria"/>
</dbReference>
<dbReference type="HOGENOM" id="CLU_072226_1_1_0"/>
<dbReference type="OrthoDB" id="9807653at2"/>
<dbReference type="EvolutionaryTrace" id="P62667"/>
<dbReference type="Proteomes" id="UP000000592">
    <property type="component" value="Chromosome"/>
</dbReference>
<dbReference type="GO" id="GO:0015935">
    <property type="term" value="C:small ribosomal subunit"/>
    <property type="evidence" value="ECO:0007669"/>
    <property type="project" value="InterPro"/>
</dbReference>
<dbReference type="GO" id="GO:0019843">
    <property type="term" value="F:rRNA binding"/>
    <property type="evidence" value="ECO:0007669"/>
    <property type="project" value="UniProtKB-UniRule"/>
</dbReference>
<dbReference type="GO" id="GO:0003735">
    <property type="term" value="F:structural constituent of ribosome"/>
    <property type="evidence" value="ECO:0007669"/>
    <property type="project" value="InterPro"/>
</dbReference>
<dbReference type="GO" id="GO:0000049">
    <property type="term" value="F:tRNA binding"/>
    <property type="evidence" value="ECO:0007669"/>
    <property type="project" value="UniProtKB-UniRule"/>
</dbReference>
<dbReference type="GO" id="GO:0006412">
    <property type="term" value="P:translation"/>
    <property type="evidence" value="ECO:0007669"/>
    <property type="project" value="UniProtKB-UniRule"/>
</dbReference>
<dbReference type="CDD" id="cd14869">
    <property type="entry name" value="uS7_Bacteria"/>
    <property type="match status" value="1"/>
</dbReference>
<dbReference type="FunFam" id="1.10.455.10:FF:000001">
    <property type="entry name" value="30S ribosomal protein S7"/>
    <property type="match status" value="1"/>
</dbReference>
<dbReference type="Gene3D" id="1.10.455.10">
    <property type="entry name" value="Ribosomal protein S7 domain"/>
    <property type="match status" value="1"/>
</dbReference>
<dbReference type="HAMAP" id="MF_00480_B">
    <property type="entry name" value="Ribosomal_uS7_B"/>
    <property type="match status" value="1"/>
</dbReference>
<dbReference type="InterPro" id="IPR000235">
    <property type="entry name" value="Ribosomal_uS7"/>
</dbReference>
<dbReference type="InterPro" id="IPR005717">
    <property type="entry name" value="Ribosomal_uS7_bac/org-type"/>
</dbReference>
<dbReference type="InterPro" id="IPR020606">
    <property type="entry name" value="Ribosomal_uS7_CS"/>
</dbReference>
<dbReference type="InterPro" id="IPR023798">
    <property type="entry name" value="Ribosomal_uS7_dom"/>
</dbReference>
<dbReference type="InterPro" id="IPR036823">
    <property type="entry name" value="Ribosomal_uS7_dom_sf"/>
</dbReference>
<dbReference type="NCBIfam" id="TIGR01029">
    <property type="entry name" value="rpsG_bact"/>
    <property type="match status" value="1"/>
</dbReference>
<dbReference type="PANTHER" id="PTHR11205">
    <property type="entry name" value="RIBOSOMAL PROTEIN S7"/>
    <property type="match status" value="1"/>
</dbReference>
<dbReference type="Pfam" id="PF00177">
    <property type="entry name" value="Ribosomal_S7"/>
    <property type="match status" value="1"/>
</dbReference>
<dbReference type="PIRSF" id="PIRSF002122">
    <property type="entry name" value="RPS7p_RPS7a_RPS5e_RPS7o"/>
    <property type="match status" value="1"/>
</dbReference>
<dbReference type="SUPFAM" id="SSF47973">
    <property type="entry name" value="Ribosomal protein S7"/>
    <property type="match status" value="1"/>
</dbReference>
<dbReference type="PROSITE" id="PS00052">
    <property type="entry name" value="RIBOSOMAL_S7"/>
    <property type="match status" value="1"/>
</dbReference>
<gene>
    <name type="primary">rpsG</name>
    <name type="synonym">rps7</name>
    <name type="ordered locus">TT_C1332</name>
</gene>
<evidence type="ECO:0000250" key="1"/>
<evidence type="ECO:0000305" key="2"/>
<evidence type="ECO:0007829" key="3">
    <source>
        <dbReference type="PDB" id="4V63"/>
    </source>
</evidence>
<evidence type="ECO:0007829" key="4">
    <source>
        <dbReference type="PDB" id="4V67"/>
    </source>
</evidence>
<evidence type="ECO:0007829" key="5">
    <source>
        <dbReference type="PDB" id="4V83"/>
    </source>
</evidence>
<protein>
    <recommendedName>
        <fullName evidence="2">Small ribosomal subunit protein uS7</fullName>
    </recommendedName>
    <alternativeName>
        <fullName>30S ribosomal protein S7</fullName>
    </alternativeName>
</protein>
<keyword id="KW-0002">3D-structure</keyword>
<keyword id="KW-0687">Ribonucleoprotein</keyword>
<keyword id="KW-0689">Ribosomal protein</keyword>
<keyword id="KW-0694">RNA-binding</keyword>
<keyword id="KW-0699">rRNA-binding</keyword>
<keyword id="KW-0820">tRNA-binding</keyword>
<sequence>MARRRRAEVRQLQPDLVYGDVLVTAFINKIMRDGKKNLAARIFYDACKIIQEKTGQEPLKVFKQAVENVKPRMEVRSRRVGGANYQVPMEVSPRRQQSLALRWLVQAANQRPERRAAVRIAHELMDAAEGKGGAVKKKEDVERMAEANRAYAHYRW</sequence>
<reference key="1">
    <citation type="journal article" date="2004" name="Nat. Biotechnol.">
        <title>The genome sequence of the extreme thermophile Thermus thermophilus.</title>
        <authorList>
            <person name="Henne A."/>
            <person name="Brueggemann H."/>
            <person name="Raasch C."/>
            <person name="Wiezer A."/>
            <person name="Hartsch T."/>
            <person name="Liesegang H."/>
            <person name="Johann A."/>
            <person name="Lienard T."/>
            <person name="Gohl O."/>
            <person name="Martinez-Arias R."/>
            <person name="Jacobi C."/>
            <person name="Starkuviene V."/>
            <person name="Schlenczeck S."/>
            <person name="Dencker S."/>
            <person name="Huber R."/>
            <person name="Klenk H.-P."/>
            <person name="Kramer W."/>
            <person name="Merkl R."/>
            <person name="Gottschalk G."/>
            <person name="Fritz H.-J."/>
        </authorList>
    </citation>
    <scope>NUCLEOTIDE SEQUENCE [LARGE SCALE GENOMIC DNA]</scope>
    <source>
        <strain>ATCC BAA-163 / DSM 7039 / HB27</strain>
    </source>
</reference>